<proteinExistence type="evidence at transcript level"/>
<name>CRIM1_DANRE</name>
<protein>
    <recommendedName>
        <fullName>Cysteine-rich motor neuron 1 protein</fullName>
        <shortName>CRIM-1</shortName>
    </recommendedName>
</protein>
<comment type="function">
    <text evidence="1">May play a role in CNS development by interacting with growth factors implicated in motor neuron differentiation and survival.</text>
</comment>
<comment type="subcellular location">
    <subcellularLocation>
        <location evidence="1">Membrane</location>
        <topology evidence="1">Single-pass type I membrane protein</topology>
    </subcellularLocation>
</comment>
<organism>
    <name type="scientific">Danio rerio</name>
    <name type="common">Zebrafish</name>
    <name type="synonym">Brachydanio rerio</name>
    <dbReference type="NCBI Taxonomy" id="7955"/>
    <lineage>
        <taxon>Eukaryota</taxon>
        <taxon>Metazoa</taxon>
        <taxon>Chordata</taxon>
        <taxon>Craniata</taxon>
        <taxon>Vertebrata</taxon>
        <taxon>Euteleostomi</taxon>
        <taxon>Actinopterygii</taxon>
        <taxon>Neopterygii</taxon>
        <taxon>Teleostei</taxon>
        <taxon>Ostariophysi</taxon>
        <taxon>Cypriniformes</taxon>
        <taxon>Danionidae</taxon>
        <taxon>Danioninae</taxon>
        <taxon>Danio</taxon>
    </lineage>
</organism>
<accession>Q7T3Q2</accession>
<dbReference type="EMBL" id="AY151045">
    <property type="protein sequence ID" value="AAN72833.1"/>
    <property type="molecule type" value="mRNA"/>
</dbReference>
<dbReference type="RefSeq" id="NP_997986.1">
    <property type="nucleotide sequence ID" value="NM_212821.1"/>
</dbReference>
<dbReference type="SMR" id="Q7T3Q2"/>
<dbReference type="FunCoup" id="Q7T3Q2">
    <property type="interactions" value="736"/>
</dbReference>
<dbReference type="STRING" id="7955.ENSDARP00000050533"/>
<dbReference type="GlyCosmos" id="Q7T3Q2">
    <property type="glycosylation" value="4 sites, No reported glycans"/>
</dbReference>
<dbReference type="PaxDb" id="7955-ENSDARP00000050533"/>
<dbReference type="GeneID" id="404210"/>
<dbReference type="KEGG" id="dre:404210"/>
<dbReference type="AGR" id="ZFIN:ZDB-GENE-040312-2"/>
<dbReference type="CTD" id="51232"/>
<dbReference type="ZFIN" id="ZDB-GENE-040312-2">
    <property type="gene designation" value="crim1"/>
</dbReference>
<dbReference type="eggNOG" id="KOG1216">
    <property type="taxonomic scope" value="Eukaryota"/>
</dbReference>
<dbReference type="InParanoid" id="Q7T3Q2"/>
<dbReference type="OrthoDB" id="5976811at2759"/>
<dbReference type="PhylomeDB" id="Q7T3Q2"/>
<dbReference type="PRO" id="PR:Q7T3Q2"/>
<dbReference type="Proteomes" id="UP000000437">
    <property type="component" value="Chromosome 17"/>
</dbReference>
<dbReference type="GO" id="GO:0005576">
    <property type="term" value="C:extracellular region"/>
    <property type="evidence" value="ECO:0007669"/>
    <property type="project" value="InterPro"/>
</dbReference>
<dbReference type="GO" id="GO:0016020">
    <property type="term" value="C:membrane"/>
    <property type="evidence" value="ECO:0007669"/>
    <property type="project" value="UniProtKB-SubCell"/>
</dbReference>
<dbReference type="GO" id="GO:0004867">
    <property type="term" value="F:serine-type endopeptidase inhibitor activity"/>
    <property type="evidence" value="ECO:0007669"/>
    <property type="project" value="InterPro"/>
</dbReference>
<dbReference type="GO" id="GO:0001568">
    <property type="term" value="P:blood vessel development"/>
    <property type="evidence" value="ECO:0000315"/>
    <property type="project" value="ZFIN"/>
</dbReference>
<dbReference type="GO" id="GO:0048570">
    <property type="term" value="P:notochord morphogenesis"/>
    <property type="evidence" value="ECO:0000315"/>
    <property type="project" value="ZFIN"/>
</dbReference>
<dbReference type="GO" id="GO:0001756">
    <property type="term" value="P:somitogenesis"/>
    <property type="evidence" value="ECO:0000315"/>
    <property type="project" value="ZFIN"/>
</dbReference>
<dbReference type="Gene3D" id="4.10.40.20">
    <property type="match status" value="1"/>
</dbReference>
<dbReference type="Gene3D" id="6.20.200.20">
    <property type="match status" value="6"/>
</dbReference>
<dbReference type="Gene3D" id="2.10.22.10">
    <property type="entry name" value="Antistasin, domain 1"/>
    <property type="match status" value="4"/>
</dbReference>
<dbReference type="InterPro" id="IPR004094">
    <property type="entry name" value="Antistasin-like"/>
</dbReference>
<dbReference type="InterPro" id="IPR052624">
    <property type="entry name" value="CRIM1"/>
</dbReference>
<dbReference type="InterPro" id="IPR045813">
    <property type="entry name" value="CRIM1_C"/>
</dbReference>
<dbReference type="InterPro" id="IPR009030">
    <property type="entry name" value="Growth_fac_rcpt_cys_sf"/>
</dbReference>
<dbReference type="InterPro" id="IPR011061">
    <property type="entry name" value="Hirudin/antistatin"/>
</dbReference>
<dbReference type="InterPro" id="IPR000867">
    <property type="entry name" value="IGFBP-like"/>
</dbReference>
<dbReference type="InterPro" id="IPR001007">
    <property type="entry name" value="VWF_dom"/>
</dbReference>
<dbReference type="PANTHER" id="PTHR46439">
    <property type="entry name" value="CYSTEINE-RICH MOTOR NEURON 1 PROTEIN"/>
    <property type="match status" value="1"/>
</dbReference>
<dbReference type="PANTHER" id="PTHR46439:SF1">
    <property type="entry name" value="CYSTEINE-RICH MOTOR NEURON 1 PROTEIN"/>
    <property type="match status" value="1"/>
</dbReference>
<dbReference type="Pfam" id="PF02822">
    <property type="entry name" value="Antistasin"/>
    <property type="match status" value="4"/>
</dbReference>
<dbReference type="Pfam" id="PF19442">
    <property type="entry name" value="CRIM1_C"/>
    <property type="match status" value="1"/>
</dbReference>
<dbReference type="Pfam" id="PF00219">
    <property type="entry name" value="IGFBP"/>
    <property type="match status" value="1"/>
</dbReference>
<dbReference type="Pfam" id="PF00093">
    <property type="entry name" value="VWC"/>
    <property type="match status" value="6"/>
</dbReference>
<dbReference type="SMART" id="SM00121">
    <property type="entry name" value="IB"/>
    <property type="match status" value="1"/>
</dbReference>
<dbReference type="SMART" id="SM00214">
    <property type="entry name" value="VWC"/>
    <property type="match status" value="6"/>
</dbReference>
<dbReference type="SMART" id="SM00215">
    <property type="entry name" value="VWC_out"/>
    <property type="match status" value="5"/>
</dbReference>
<dbReference type="SUPFAM" id="SSF57603">
    <property type="entry name" value="FnI-like domain"/>
    <property type="match status" value="5"/>
</dbReference>
<dbReference type="SUPFAM" id="SSF57184">
    <property type="entry name" value="Growth factor receptor domain"/>
    <property type="match status" value="1"/>
</dbReference>
<dbReference type="SUPFAM" id="SSF57262">
    <property type="entry name" value="Leech antihemostatic proteins"/>
    <property type="match status" value="3"/>
</dbReference>
<dbReference type="PROSITE" id="PS51252">
    <property type="entry name" value="ANTISTASIN"/>
    <property type="match status" value="4"/>
</dbReference>
<dbReference type="PROSITE" id="PS51323">
    <property type="entry name" value="IGFBP_N_2"/>
    <property type="match status" value="1"/>
</dbReference>
<dbReference type="PROSITE" id="PS01208">
    <property type="entry name" value="VWFC_1"/>
    <property type="match status" value="6"/>
</dbReference>
<dbReference type="PROSITE" id="PS50184">
    <property type="entry name" value="VWFC_2"/>
    <property type="match status" value="6"/>
</dbReference>
<reference key="1">
    <citation type="submission" date="2002-09" db="EMBL/GenBank/DDBJ databases">
        <title>Characterization of zebrafish crim1 ortholog.</title>
        <authorList>
            <person name="Kolle G.V."/>
            <person name="Little M."/>
        </authorList>
    </citation>
    <scope>NUCLEOTIDE SEQUENCE [MRNA]</scope>
</reference>
<keyword id="KW-1015">Disulfide bond</keyword>
<keyword id="KW-0325">Glycoprotein</keyword>
<keyword id="KW-0472">Membrane</keyword>
<keyword id="KW-1185">Reference proteome</keyword>
<keyword id="KW-0677">Repeat</keyword>
<keyword id="KW-0732">Signal</keyword>
<keyword id="KW-0812">Transmembrane</keyword>
<keyword id="KW-1133">Transmembrane helix</keyword>
<feature type="signal peptide" evidence="2">
    <location>
        <begin position="1"/>
        <end position="28"/>
    </location>
</feature>
<feature type="chain" id="PRO_0000020999" description="Cysteine-rich motor neuron 1 protein">
    <location>
        <begin position="29"/>
        <end position="1027"/>
    </location>
</feature>
<feature type="topological domain" description="Extracellular" evidence="2">
    <location>
        <begin position="29"/>
        <end position="931"/>
    </location>
</feature>
<feature type="transmembrane region" description="Helical" evidence="2">
    <location>
        <begin position="932"/>
        <end position="952"/>
    </location>
</feature>
<feature type="topological domain" description="Cytoplasmic" evidence="2">
    <location>
        <begin position="953"/>
        <end position="1027"/>
    </location>
</feature>
<feature type="domain" description="IGFBP N-terminal" evidence="5">
    <location>
        <begin position="29"/>
        <end position="106"/>
    </location>
</feature>
<feature type="domain" description="VWFC 1" evidence="3">
    <location>
        <begin position="328"/>
        <end position="385"/>
    </location>
</feature>
<feature type="domain" description="VWFC 2" evidence="3">
    <location>
        <begin position="395"/>
        <end position="451"/>
    </location>
</feature>
<feature type="domain" description="Antistasin-like 1" evidence="4">
    <location>
        <begin position="463"/>
        <end position="492"/>
    </location>
</feature>
<feature type="domain" description="Antistasin-like 2" evidence="4">
    <location>
        <begin position="499"/>
        <end position="526"/>
    </location>
</feature>
<feature type="domain" description="Antistasin-like 3" evidence="4">
    <location>
        <begin position="533"/>
        <end position="558"/>
    </location>
</feature>
<feature type="domain" description="Antistasin-like 4" evidence="4">
    <location>
        <begin position="561"/>
        <end position="586"/>
    </location>
</feature>
<feature type="domain" description="VWFC 3" evidence="3">
    <location>
        <begin position="601"/>
        <end position="658"/>
    </location>
</feature>
<feature type="domain" description="VWFC 4" evidence="3">
    <location>
        <begin position="672"/>
        <end position="730"/>
    </location>
</feature>
<feature type="domain" description="VWFC 5" evidence="3">
    <location>
        <begin position="746"/>
        <end position="804"/>
    </location>
</feature>
<feature type="domain" description="VWFC 6" evidence="3">
    <location>
        <begin position="810"/>
        <end position="867"/>
    </location>
</feature>
<feature type="region of interest" description="Disordered" evidence="6">
    <location>
        <begin position="877"/>
        <end position="897"/>
    </location>
</feature>
<feature type="short sequence motif" description="Cell attachment site" evidence="2">
    <location>
        <begin position="308"/>
        <end position="310"/>
    </location>
</feature>
<feature type="short sequence motif" description="Cell attachment site" evidence="2">
    <location>
        <begin position="883"/>
        <end position="885"/>
    </location>
</feature>
<feature type="compositionally biased region" description="Basic and acidic residues" evidence="6">
    <location>
        <begin position="878"/>
        <end position="888"/>
    </location>
</feature>
<feature type="glycosylation site" description="N-linked (GlcNAc...) asparagine" evidence="2">
    <location>
        <position position="65"/>
    </location>
</feature>
<feature type="glycosylation site" description="N-linked (GlcNAc...) asparagine" evidence="2">
    <location>
        <position position="324"/>
    </location>
</feature>
<feature type="glycosylation site" description="N-linked (GlcNAc...) asparagine" evidence="2">
    <location>
        <position position="468"/>
    </location>
</feature>
<feature type="glycosylation site" description="N-linked (GlcNAc...) asparagine" evidence="2">
    <location>
        <position position="741"/>
    </location>
</feature>
<feature type="disulfide bond" evidence="5">
    <location>
        <begin position="31"/>
        <end position="54"/>
    </location>
</feature>
<feature type="disulfide bond" evidence="5">
    <location>
        <begin position="34"/>
        <end position="56"/>
    </location>
</feature>
<feature type="disulfide bond" evidence="5">
    <location>
        <begin position="39"/>
        <end position="57"/>
    </location>
</feature>
<feature type="disulfide bond" evidence="5">
    <location>
        <begin position="45"/>
        <end position="60"/>
    </location>
</feature>
<feature type="disulfide bond" evidence="5">
    <location>
        <begin position="68"/>
        <end position="84"/>
    </location>
</feature>
<feature type="disulfide bond" evidence="5">
    <location>
        <begin position="78"/>
        <end position="103"/>
    </location>
</feature>
<sequence>MASSRMYLLVKCMLILQLMVLIAKNSRALICLPCDKSKCEEPKPCTGSVVLGICGCCSVCAKQKNESCGGVYGLYGTCDRGLRCVIRPPLNGGSITQYEVGNCEDENWDDDQLLGFEPCNENLVTGCNIIDGKCECDSVRTCNNPFEFASQEACQTALQKIEEERPDCSKARCEVQFSPRCPEDSILIEGYAPPGECCPLPSRCVCSPAGCLRKVCQPGHLNILVSKSSGKPGECCDLYECKPVFSVDCSTVECPPVKPVQCPADSYETQVRLTADGCCTLPTRCECLPGLCTFPQCSAGMSPQVMSRGDGTPGRCCDVFECVNETKPACTLNGVEYHDGDMFRMDACRFCRCQGGVSVCFTAQCGVLHCERYYVPDGECCPVCEDPIYPVLSLAGCYVNGQILAHGDHWREDDCTFCQCVSGDARCVAAACGHSCLNPVTVPGECCPVCEEPTYITMAPPACGSLDNCTLLEQSCAFGFRLDPSGCRTCACKSREELCGGLMASCTLKCPFGFQTDIHGCDVCQCRPRHKKCKAVACAKDCPFGYIKNKHGCDTCRCKKCPELPCDKACPMGFQHDELGCLICQCRDQSSSSVTPAVKLGSCLSMDGRRHENGQSWHDGCRDCYCHAGREMCALISCPVPPCDNPTIRPGHCCPTCPEESSSHKPELSEASVCLAPGGEYFVEGETWNIDSCTQCTCHSGRVLCETEVCPPLLCHSPIRTQDSCCPHCPDDPVTPQTPSNDSMPSYCRNEDGDIFLAAESWKPNVCSSCVCLDGAISCFSESCPPVNCARPVLRKGQCCPYCLDATPRAVCHFNGKTYMDEERWDIDSCTHCYCLQGQTLCSTVSCPALPCHQPLTVEGSCCPMCPESYAPTNVPIEKTDQRGDKSRHQPAWPTHSENDVMPQFRGEFGSLQMPYLDGKTPLPSEDAGLHWAWVALPVLMMMLTLAALLLVNQRKQWIPVPCYRTPNKSTCLNNQLVYVDCQKGTKVQVDSSQRMLRIADPDSRYSGYYSMQKHNNLQADNFYQTA</sequence>
<evidence type="ECO:0000250" key="1"/>
<evidence type="ECO:0000255" key="2"/>
<evidence type="ECO:0000255" key="3">
    <source>
        <dbReference type="PROSITE-ProRule" id="PRU00220"/>
    </source>
</evidence>
<evidence type="ECO:0000255" key="4">
    <source>
        <dbReference type="PROSITE-ProRule" id="PRU00582"/>
    </source>
</evidence>
<evidence type="ECO:0000255" key="5">
    <source>
        <dbReference type="PROSITE-ProRule" id="PRU00653"/>
    </source>
</evidence>
<evidence type="ECO:0000256" key="6">
    <source>
        <dbReference type="SAM" id="MobiDB-lite"/>
    </source>
</evidence>
<gene>
    <name type="primary">crim1</name>
</gene>